<accession>Q0BB89</accession>
<name>GLMU_BURCM</name>
<dbReference type="EC" id="2.7.7.23" evidence="1"/>
<dbReference type="EC" id="2.3.1.157" evidence="1"/>
<dbReference type="EMBL" id="CP000440">
    <property type="protein sequence ID" value="ABI88584.1"/>
    <property type="molecule type" value="Genomic_DNA"/>
</dbReference>
<dbReference type="RefSeq" id="WP_011658112.1">
    <property type="nucleotide sequence ID" value="NC_008390.1"/>
</dbReference>
<dbReference type="SMR" id="Q0BB89"/>
<dbReference type="GeneID" id="93084770"/>
<dbReference type="KEGG" id="bam:Bamb_3028"/>
<dbReference type="PATRIC" id="fig|339670.21.peg.1841"/>
<dbReference type="eggNOG" id="COG1207">
    <property type="taxonomic scope" value="Bacteria"/>
</dbReference>
<dbReference type="UniPathway" id="UPA00113">
    <property type="reaction ID" value="UER00532"/>
</dbReference>
<dbReference type="UniPathway" id="UPA00113">
    <property type="reaction ID" value="UER00533"/>
</dbReference>
<dbReference type="UniPathway" id="UPA00973"/>
<dbReference type="Proteomes" id="UP000000662">
    <property type="component" value="Chromosome 1"/>
</dbReference>
<dbReference type="GO" id="GO:0005737">
    <property type="term" value="C:cytoplasm"/>
    <property type="evidence" value="ECO:0007669"/>
    <property type="project" value="UniProtKB-SubCell"/>
</dbReference>
<dbReference type="GO" id="GO:0016020">
    <property type="term" value="C:membrane"/>
    <property type="evidence" value="ECO:0007669"/>
    <property type="project" value="GOC"/>
</dbReference>
<dbReference type="GO" id="GO:0019134">
    <property type="term" value="F:glucosamine-1-phosphate N-acetyltransferase activity"/>
    <property type="evidence" value="ECO:0007669"/>
    <property type="project" value="UniProtKB-UniRule"/>
</dbReference>
<dbReference type="GO" id="GO:0000287">
    <property type="term" value="F:magnesium ion binding"/>
    <property type="evidence" value="ECO:0007669"/>
    <property type="project" value="UniProtKB-UniRule"/>
</dbReference>
<dbReference type="GO" id="GO:0003977">
    <property type="term" value="F:UDP-N-acetylglucosamine diphosphorylase activity"/>
    <property type="evidence" value="ECO:0007669"/>
    <property type="project" value="UniProtKB-UniRule"/>
</dbReference>
<dbReference type="GO" id="GO:0000902">
    <property type="term" value="P:cell morphogenesis"/>
    <property type="evidence" value="ECO:0007669"/>
    <property type="project" value="UniProtKB-UniRule"/>
</dbReference>
<dbReference type="GO" id="GO:0071555">
    <property type="term" value="P:cell wall organization"/>
    <property type="evidence" value="ECO:0007669"/>
    <property type="project" value="UniProtKB-KW"/>
</dbReference>
<dbReference type="GO" id="GO:0009245">
    <property type="term" value="P:lipid A biosynthetic process"/>
    <property type="evidence" value="ECO:0007669"/>
    <property type="project" value="UniProtKB-UniRule"/>
</dbReference>
<dbReference type="GO" id="GO:0009252">
    <property type="term" value="P:peptidoglycan biosynthetic process"/>
    <property type="evidence" value="ECO:0007669"/>
    <property type="project" value="UniProtKB-UniRule"/>
</dbReference>
<dbReference type="GO" id="GO:0008360">
    <property type="term" value="P:regulation of cell shape"/>
    <property type="evidence" value="ECO:0007669"/>
    <property type="project" value="UniProtKB-KW"/>
</dbReference>
<dbReference type="GO" id="GO:0006048">
    <property type="term" value="P:UDP-N-acetylglucosamine biosynthetic process"/>
    <property type="evidence" value="ECO:0007669"/>
    <property type="project" value="UniProtKB-UniPathway"/>
</dbReference>
<dbReference type="CDD" id="cd02540">
    <property type="entry name" value="GT2_GlmU_N_bac"/>
    <property type="match status" value="1"/>
</dbReference>
<dbReference type="CDD" id="cd03353">
    <property type="entry name" value="LbH_GlmU_C"/>
    <property type="match status" value="1"/>
</dbReference>
<dbReference type="Gene3D" id="2.160.10.10">
    <property type="entry name" value="Hexapeptide repeat proteins"/>
    <property type="match status" value="1"/>
</dbReference>
<dbReference type="Gene3D" id="3.90.550.10">
    <property type="entry name" value="Spore Coat Polysaccharide Biosynthesis Protein SpsA, Chain A"/>
    <property type="match status" value="1"/>
</dbReference>
<dbReference type="HAMAP" id="MF_01631">
    <property type="entry name" value="GlmU"/>
    <property type="match status" value="1"/>
</dbReference>
<dbReference type="InterPro" id="IPR005882">
    <property type="entry name" value="Bifunctional_GlmU"/>
</dbReference>
<dbReference type="InterPro" id="IPR050065">
    <property type="entry name" value="GlmU-like"/>
</dbReference>
<dbReference type="InterPro" id="IPR038009">
    <property type="entry name" value="GlmU_C_LbH"/>
</dbReference>
<dbReference type="InterPro" id="IPR001451">
    <property type="entry name" value="Hexapep"/>
</dbReference>
<dbReference type="InterPro" id="IPR018357">
    <property type="entry name" value="Hexapep_transf_CS"/>
</dbReference>
<dbReference type="InterPro" id="IPR025877">
    <property type="entry name" value="MobA-like_NTP_Trfase"/>
</dbReference>
<dbReference type="InterPro" id="IPR029044">
    <property type="entry name" value="Nucleotide-diphossugar_trans"/>
</dbReference>
<dbReference type="InterPro" id="IPR011004">
    <property type="entry name" value="Trimer_LpxA-like_sf"/>
</dbReference>
<dbReference type="NCBIfam" id="TIGR01173">
    <property type="entry name" value="glmU"/>
    <property type="match status" value="1"/>
</dbReference>
<dbReference type="PANTHER" id="PTHR43584:SF3">
    <property type="entry name" value="BIFUNCTIONAL PROTEIN GLMU"/>
    <property type="match status" value="1"/>
</dbReference>
<dbReference type="PANTHER" id="PTHR43584">
    <property type="entry name" value="NUCLEOTIDYL TRANSFERASE"/>
    <property type="match status" value="1"/>
</dbReference>
<dbReference type="Pfam" id="PF00132">
    <property type="entry name" value="Hexapep"/>
    <property type="match status" value="2"/>
</dbReference>
<dbReference type="Pfam" id="PF12804">
    <property type="entry name" value="NTP_transf_3"/>
    <property type="match status" value="1"/>
</dbReference>
<dbReference type="SUPFAM" id="SSF53448">
    <property type="entry name" value="Nucleotide-diphospho-sugar transferases"/>
    <property type="match status" value="1"/>
</dbReference>
<dbReference type="SUPFAM" id="SSF51161">
    <property type="entry name" value="Trimeric LpxA-like enzymes"/>
    <property type="match status" value="1"/>
</dbReference>
<dbReference type="PROSITE" id="PS00101">
    <property type="entry name" value="HEXAPEP_TRANSFERASES"/>
    <property type="match status" value="2"/>
</dbReference>
<proteinExistence type="inferred from homology"/>
<comment type="function">
    <text evidence="1">Catalyzes the last two sequential reactions in the de novo biosynthetic pathway for UDP-N-acetylglucosamine (UDP-GlcNAc). The C-terminal domain catalyzes the transfer of acetyl group from acetyl coenzyme A to glucosamine-1-phosphate (GlcN-1-P) to produce N-acetylglucosamine-1-phosphate (GlcNAc-1-P), which is converted into UDP-GlcNAc by the transfer of uridine 5-monophosphate (from uridine 5-triphosphate), a reaction catalyzed by the N-terminal domain.</text>
</comment>
<comment type="catalytic activity">
    <reaction evidence="1">
        <text>alpha-D-glucosamine 1-phosphate + acetyl-CoA = N-acetyl-alpha-D-glucosamine 1-phosphate + CoA + H(+)</text>
        <dbReference type="Rhea" id="RHEA:13725"/>
        <dbReference type="ChEBI" id="CHEBI:15378"/>
        <dbReference type="ChEBI" id="CHEBI:57287"/>
        <dbReference type="ChEBI" id="CHEBI:57288"/>
        <dbReference type="ChEBI" id="CHEBI:57776"/>
        <dbReference type="ChEBI" id="CHEBI:58516"/>
        <dbReference type="EC" id="2.3.1.157"/>
    </reaction>
</comment>
<comment type="catalytic activity">
    <reaction evidence="1">
        <text>N-acetyl-alpha-D-glucosamine 1-phosphate + UTP + H(+) = UDP-N-acetyl-alpha-D-glucosamine + diphosphate</text>
        <dbReference type="Rhea" id="RHEA:13509"/>
        <dbReference type="ChEBI" id="CHEBI:15378"/>
        <dbReference type="ChEBI" id="CHEBI:33019"/>
        <dbReference type="ChEBI" id="CHEBI:46398"/>
        <dbReference type="ChEBI" id="CHEBI:57705"/>
        <dbReference type="ChEBI" id="CHEBI:57776"/>
        <dbReference type="EC" id="2.7.7.23"/>
    </reaction>
</comment>
<comment type="cofactor">
    <cofactor evidence="1">
        <name>Mg(2+)</name>
        <dbReference type="ChEBI" id="CHEBI:18420"/>
    </cofactor>
    <text evidence="1">Binds 1 Mg(2+) ion per subunit.</text>
</comment>
<comment type="pathway">
    <text evidence="1">Nucleotide-sugar biosynthesis; UDP-N-acetyl-alpha-D-glucosamine biosynthesis; N-acetyl-alpha-D-glucosamine 1-phosphate from alpha-D-glucosamine 6-phosphate (route II): step 2/2.</text>
</comment>
<comment type="pathway">
    <text evidence="1">Nucleotide-sugar biosynthesis; UDP-N-acetyl-alpha-D-glucosamine biosynthesis; UDP-N-acetyl-alpha-D-glucosamine from N-acetyl-alpha-D-glucosamine 1-phosphate: step 1/1.</text>
</comment>
<comment type="pathway">
    <text evidence="1">Bacterial outer membrane biogenesis; LPS lipid A biosynthesis.</text>
</comment>
<comment type="subunit">
    <text evidence="1">Homotrimer.</text>
</comment>
<comment type="subcellular location">
    <subcellularLocation>
        <location evidence="1">Cytoplasm</location>
    </subcellularLocation>
</comment>
<comment type="similarity">
    <text evidence="1">In the N-terminal section; belongs to the N-acetylglucosamine-1-phosphate uridyltransferase family.</text>
</comment>
<comment type="similarity">
    <text evidence="1">In the C-terminal section; belongs to the transferase hexapeptide repeat family.</text>
</comment>
<keyword id="KW-0012">Acyltransferase</keyword>
<keyword id="KW-0133">Cell shape</keyword>
<keyword id="KW-0961">Cell wall biogenesis/degradation</keyword>
<keyword id="KW-0963">Cytoplasm</keyword>
<keyword id="KW-0460">Magnesium</keyword>
<keyword id="KW-0479">Metal-binding</keyword>
<keyword id="KW-0511">Multifunctional enzyme</keyword>
<keyword id="KW-0548">Nucleotidyltransferase</keyword>
<keyword id="KW-0573">Peptidoglycan synthesis</keyword>
<keyword id="KW-0677">Repeat</keyword>
<keyword id="KW-0808">Transferase</keyword>
<sequence>MNIVILAAGTGKRMRSALPKVLHPLAGRPLLSHVIATARTLQPSRLVVVVGHGAEQVQAAVAAPDVQFAVQAEQLGTGHAVRQALPLLDPAQPTLVLYGDVPLTRASTLRRLVDAARDGSYGILTVTLDDPTGYGRIVRDAAGFVTRIVEQKDASPEQLKIAEINTGIIITPTGQLAMWLGALKNENAQGEYYLTDVVELAIEAGFDVVTSQPDDEWETLGVNSKAQLAELERIHQRNVADALLVDGVTLADPARVDVRGTLRCGRDVSIDVNCVFEGNVTLADNVTIGPNCVIRNASVGTGTRIDAFTHIDGAELGANTVIGPYARLRPGAQLADEAHVGNFVEVKNAVIGHGSKANHLTYIGDADIGARVNIGAGTITCNYDGANKFRTVIEDDVFVGSDTQLVAPVRVGRGVTIAAGTTIWKDVAEGVLALNEKTQTAKSGYVRPVKKKS</sequence>
<reference key="1">
    <citation type="submission" date="2006-08" db="EMBL/GenBank/DDBJ databases">
        <title>Complete sequence of chromosome 1 of Burkholderia cepacia AMMD.</title>
        <authorList>
            <person name="Copeland A."/>
            <person name="Lucas S."/>
            <person name="Lapidus A."/>
            <person name="Barry K."/>
            <person name="Detter J.C."/>
            <person name="Glavina del Rio T."/>
            <person name="Hammon N."/>
            <person name="Israni S."/>
            <person name="Pitluck S."/>
            <person name="Bruce D."/>
            <person name="Chain P."/>
            <person name="Malfatti S."/>
            <person name="Shin M."/>
            <person name="Vergez L."/>
            <person name="Schmutz J."/>
            <person name="Larimer F."/>
            <person name="Land M."/>
            <person name="Hauser L."/>
            <person name="Kyrpides N."/>
            <person name="Kim E."/>
            <person name="Parke J."/>
            <person name="Coenye T."/>
            <person name="Konstantinidis K."/>
            <person name="Ramette A."/>
            <person name="Tiedje J."/>
            <person name="Richardson P."/>
        </authorList>
    </citation>
    <scope>NUCLEOTIDE SEQUENCE [LARGE SCALE GENOMIC DNA]</scope>
    <source>
        <strain>ATCC BAA-244 / DSM 16087 / CCUG 44356 / LMG 19182 / AMMD</strain>
    </source>
</reference>
<evidence type="ECO:0000255" key="1">
    <source>
        <dbReference type="HAMAP-Rule" id="MF_01631"/>
    </source>
</evidence>
<feature type="chain" id="PRO_1000056141" description="Bifunctional protein GlmU">
    <location>
        <begin position="1"/>
        <end position="453"/>
    </location>
</feature>
<feature type="region of interest" description="Pyrophosphorylase" evidence="1">
    <location>
        <begin position="1"/>
        <end position="225"/>
    </location>
</feature>
<feature type="region of interest" description="Linker" evidence="1">
    <location>
        <begin position="226"/>
        <end position="246"/>
    </location>
</feature>
<feature type="region of interest" description="N-acetyltransferase" evidence="1">
    <location>
        <begin position="247"/>
        <end position="453"/>
    </location>
</feature>
<feature type="active site" description="Proton acceptor" evidence="1">
    <location>
        <position position="359"/>
    </location>
</feature>
<feature type="binding site" evidence="1">
    <location>
        <begin position="6"/>
        <end position="9"/>
    </location>
    <ligand>
        <name>UDP-N-acetyl-alpha-D-glucosamine</name>
        <dbReference type="ChEBI" id="CHEBI:57705"/>
    </ligand>
</feature>
<feature type="binding site" evidence="1">
    <location>
        <position position="20"/>
    </location>
    <ligand>
        <name>UDP-N-acetyl-alpha-D-glucosamine</name>
        <dbReference type="ChEBI" id="CHEBI:57705"/>
    </ligand>
</feature>
<feature type="binding site" evidence="1">
    <location>
        <position position="71"/>
    </location>
    <ligand>
        <name>UDP-N-acetyl-alpha-D-glucosamine</name>
        <dbReference type="ChEBI" id="CHEBI:57705"/>
    </ligand>
</feature>
<feature type="binding site" evidence="1">
    <location>
        <begin position="76"/>
        <end position="77"/>
    </location>
    <ligand>
        <name>UDP-N-acetyl-alpha-D-glucosamine</name>
        <dbReference type="ChEBI" id="CHEBI:57705"/>
    </ligand>
</feature>
<feature type="binding site" evidence="1">
    <location>
        <begin position="98"/>
        <end position="100"/>
    </location>
    <ligand>
        <name>UDP-N-acetyl-alpha-D-glucosamine</name>
        <dbReference type="ChEBI" id="CHEBI:57705"/>
    </ligand>
</feature>
<feature type="binding site" evidence="1">
    <location>
        <position position="100"/>
    </location>
    <ligand>
        <name>Mg(2+)</name>
        <dbReference type="ChEBI" id="CHEBI:18420"/>
    </ligand>
</feature>
<feature type="binding site" evidence="1">
    <location>
        <position position="135"/>
    </location>
    <ligand>
        <name>UDP-N-acetyl-alpha-D-glucosamine</name>
        <dbReference type="ChEBI" id="CHEBI:57705"/>
    </ligand>
</feature>
<feature type="binding site" evidence="1">
    <location>
        <position position="150"/>
    </location>
    <ligand>
        <name>UDP-N-acetyl-alpha-D-glucosamine</name>
        <dbReference type="ChEBI" id="CHEBI:57705"/>
    </ligand>
</feature>
<feature type="binding site" evidence="1">
    <location>
        <position position="165"/>
    </location>
    <ligand>
        <name>UDP-N-acetyl-alpha-D-glucosamine</name>
        <dbReference type="ChEBI" id="CHEBI:57705"/>
    </ligand>
</feature>
<feature type="binding site" evidence="1">
    <location>
        <position position="223"/>
    </location>
    <ligand>
        <name>Mg(2+)</name>
        <dbReference type="ChEBI" id="CHEBI:18420"/>
    </ligand>
</feature>
<feature type="binding site" evidence="1">
    <location>
        <position position="223"/>
    </location>
    <ligand>
        <name>UDP-N-acetyl-alpha-D-glucosamine</name>
        <dbReference type="ChEBI" id="CHEBI:57705"/>
    </ligand>
</feature>
<feature type="binding site" evidence="1">
    <location>
        <position position="329"/>
    </location>
    <ligand>
        <name>UDP-N-acetyl-alpha-D-glucosamine</name>
        <dbReference type="ChEBI" id="CHEBI:57705"/>
    </ligand>
</feature>
<feature type="binding site" evidence="1">
    <location>
        <position position="347"/>
    </location>
    <ligand>
        <name>UDP-N-acetyl-alpha-D-glucosamine</name>
        <dbReference type="ChEBI" id="CHEBI:57705"/>
    </ligand>
</feature>
<feature type="binding site" evidence="1">
    <location>
        <position position="362"/>
    </location>
    <ligand>
        <name>UDP-N-acetyl-alpha-D-glucosamine</name>
        <dbReference type="ChEBI" id="CHEBI:57705"/>
    </ligand>
</feature>
<feature type="binding site" evidence="1">
    <location>
        <position position="373"/>
    </location>
    <ligand>
        <name>UDP-N-acetyl-alpha-D-glucosamine</name>
        <dbReference type="ChEBI" id="CHEBI:57705"/>
    </ligand>
</feature>
<feature type="binding site" evidence="1">
    <location>
        <position position="376"/>
    </location>
    <ligand>
        <name>acetyl-CoA</name>
        <dbReference type="ChEBI" id="CHEBI:57288"/>
    </ligand>
</feature>
<feature type="binding site" evidence="1">
    <location>
        <begin position="382"/>
        <end position="383"/>
    </location>
    <ligand>
        <name>acetyl-CoA</name>
        <dbReference type="ChEBI" id="CHEBI:57288"/>
    </ligand>
</feature>
<feature type="binding site" evidence="1">
    <location>
        <position position="401"/>
    </location>
    <ligand>
        <name>acetyl-CoA</name>
        <dbReference type="ChEBI" id="CHEBI:57288"/>
    </ligand>
</feature>
<feature type="binding site" evidence="1">
    <location>
        <position position="419"/>
    </location>
    <ligand>
        <name>acetyl-CoA</name>
        <dbReference type="ChEBI" id="CHEBI:57288"/>
    </ligand>
</feature>
<organism>
    <name type="scientific">Burkholderia ambifaria (strain ATCC BAA-244 / DSM 16087 / CCUG 44356 / LMG 19182 / AMMD)</name>
    <name type="common">Burkholderia cepacia (strain AMMD)</name>
    <dbReference type="NCBI Taxonomy" id="339670"/>
    <lineage>
        <taxon>Bacteria</taxon>
        <taxon>Pseudomonadati</taxon>
        <taxon>Pseudomonadota</taxon>
        <taxon>Betaproteobacteria</taxon>
        <taxon>Burkholderiales</taxon>
        <taxon>Burkholderiaceae</taxon>
        <taxon>Burkholderia</taxon>
        <taxon>Burkholderia cepacia complex</taxon>
    </lineage>
</organism>
<gene>
    <name evidence="1" type="primary">glmU</name>
    <name type="ordered locus">Bamb_3028</name>
</gene>
<protein>
    <recommendedName>
        <fullName evidence="1">Bifunctional protein GlmU</fullName>
    </recommendedName>
    <domain>
        <recommendedName>
            <fullName evidence="1">UDP-N-acetylglucosamine pyrophosphorylase</fullName>
            <ecNumber evidence="1">2.7.7.23</ecNumber>
        </recommendedName>
        <alternativeName>
            <fullName evidence="1">N-acetylglucosamine-1-phosphate uridyltransferase</fullName>
        </alternativeName>
    </domain>
    <domain>
        <recommendedName>
            <fullName evidence="1">Glucosamine-1-phosphate N-acetyltransferase</fullName>
            <ecNumber evidence="1">2.3.1.157</ecNumber>
        </recommendedName>
    </domain>
</protein>